<name>DEFA9_MOUSE</name>
<comment type="function">
    <text>Probably contributes to the antimicrobial barrier function of the small bowel mucosa.</text>
</comment>
<comment type="subcellular location">
    <subcellularLocation>
        <location>Secreted</location>
    </subcellularLocation>
</comment>
<comment type="tissue specificity">
    <text>Paneth cells of the small bowel.</text>
</comment>
<comment type="similarity">
    <text evidence="4">Belongs to the alpha-defensin family.</text>
</comment>
<dbReference type="EMBL" id="U03037">
    <property type="protein sequence ID" value="AAA57177.1"/>
    <property type="molecule type" value="mRNA"/>
</dbReference>
<dbReference type="PIR" id="I48892">
    <property type="entry name" value="I48892"/>
</dbReference>
<dbReference type="SMR" id="P50707"/>
<dbReference type="FunCoup" id="P50707">
    <property type="interactions" value="42"/>
</dbReference>
<dbReference type="PeptideAtlas" id="P50707"/>
<dbReference type="AGR" id="MGI:99579"/>
<dbReference type="MGI" id="MGI:99579">
    <property type="gene designation" value="Defa9"/>
</dbReference>
<dbReference type="InParanoid" id="P50707"/>
<dbReference type="PRO" id="PR:P50707"/>
<dbReference type="Proteomes" id="UP000000589">
    <property type="component" value="Unplaced"/>
</dbReference>
<dbReference type="RNAct" id="P50707">
    <property type="molecule type" value="protein"/>
</dbReference>
<dbReference type="GO" id="GO:0005615">
    <property type="term" value="C:extracellular space"/>
    <property type="evidence" value="ECO:0007669"/>
    <property type="project" value="InterPro"/>
</dbReference>
<dbReference type="GO" id="GO:0042742">
    <property type="term" value="P:defense response to bacterium"/>
    <property type="evidence" value="ECO:0007669"/>
    <property type="project" value="UniProtKB-KW"/>
</dbReference>
<dbReference type="InterPro" id="IPR016327">
    <property type="entry name" value="Alpha-defensin"/>
</dbReference>
<dbReference type="InterPro" id="IPR006081">
    <property type="entry name" value="Alpha-defensin_C"/>
</dbReference>
<dbReference type="InterPro" id="IPR002366">
    <property type="entry name" value="Alpha-defensin_N"/>
</dbReference>
<dbReference type="InterPro" id="IPR006080">
    <property type="entry name" value="Beta/alpha-defensin_C"/>
</dbReference>
<dbReference type="PANTHER" id="PTHR11876">
    <property type="entry name" value="ALPHA-DEFENSIN 1"/>
    <property type="match status" value="1"/>
</dbReference>
<dbReference type="PANTHER" id="PTHR11876:SF2">
    <property type="entry name" value="ALPHA-DEFENSIN 1-RELATED"/>
    <property type="match status" value="1"/>
</dbReference>
<dbReference type="Pfam" id="PF00323">
    <property type="entry name" value="Defensin_1"/>
    <property type="match status" value="1"/>
</dbReference>
<dbReference type="Pfam" id="PF00879">
    <property type="entry name" value="Defensin_propep"/>
    <property type="match status" value="1"/>
</dbReference>
<dbReference type="PIRSF" id="PIRSF001875">
    <property type="entry name" value="Alpha-defensin"/>
    <property type="match status" value="1"/>
</dbReference>
<dbReference type="SMART" id="SM01418">
    <property type="entry name" value="Defensin_propep"/>
    <property type="match status" value="1"/>
</dbReference>
<dbReference type="SMART" id="SM00048">
    <property type="entry name" value="DEFSN"/>
    <property type="match status" value="1"/>
</dbReference>
<dbReference type="SUPFAM" id="SSF57392">
    <property type="entry name" value="Defensin-like"/>
    <property type="match status" value="1"/>
</dbReference>
<dbReference type="PROSITE" id="PS00269">
    <property type="entry name" value="DEFENSIN"/>
    <property type="match status" value="1"/>
</dbReference>
<reference key="1">
    <citation type="journal article" date="1994" name="Infect. Immun.">
        <title>Mouse Paneth cell defensins: primary structures and antibacterial activities of numerous cryptdin isoforms.</title>
        <authorList>
            <person name="Ouellette A.J."/>
            <person name="Hsieh M.M."/>
            <person name="Nosek M.T."/>
            <person name="Cano-Gauci D.F."/>
            <person name="Huttner K.M."/>
            <person name="Buick R.N."/>
            <person name="Selsted M.E."/>
        </authorList>
    </citation>
    <scope>NUCLEOTIDE SEQUENCE [MRNA]</scope>
    <source>
        <strain>CD-1</strain>
        <tissue>Intestinal crypt</tissue>
    </source>
</reference>
<reference key="2">
    <citation type="journal article" date="1994" name="Genomics">
        <title>Structure and diversity of the murine cryptdin gene family.</title>
        <authorList>
            <person name="Huttner K.M."/>
            <person name="Selsted M.E."/>
            <person name="Ouellette A.J."/>
        </authorList>
    </citation>
    <scope>NUCLEOTIDE SEQUENCE [MRNA] OF 59-93</scope>
    <source>
        <strain>129/SvJ</strain>
        <strain>C3H/HeJ</strain>
        <tissue>Small intestine</tissue>
    </source>
</reference>
<protein>
    <recommendedName>
        <fullName>Alpha-defensin 9</fullName>
    </recommendedName>
    <alternativeName>
        <fullName>Defensin-related cryptdin-9</fullName>
    </alternativeName>
</protein>
<gene>
    <name type="primary">Defa9</name>
    <name type="synonym">Defcr9</name>
</gene>
<evidence type="ECO:0000250" key="1"/>
<evidence type="ECO:0000255" key="2"/>
<evidence type="ECO:0000256" key="3">
    <source>
        <dbReference type="SAM" id="MobiDB-lite"/>
    </source>
</evidence>
<evidence type="ECO:0000305" key="4"/>
<feature type="signal peptide" evidence="2">
    <location>
        <begin position="1"/>
        <end position="19"/>
    </location>
</feature>
<feature type="propeptide" id="PRO_0000006833" evidence="1">
    <location>
        <begin position="20"/>
        <end position="58"/>
    </location>
</feature>
<feature type="peptide" id="PRO_0000006834" description="Alpha-defensin 9">
    <location>
        <begin position="59"/>
        <end position="93"/>
    </location>
</feature>
<feature type="region of interest" description="Disordered" evidence="3">
    <location>
        <begin position="23"/>
        <end position="56"/>
    </location>
</feature>
<feature type="disulfide bond" evidence="1">
    <location>
        <begin position="64"/>
        <end position="92"/>
    </location>
</feature>
<feature type="disulfide bond" evidence="1">
    <location>
        <begin position="66"/>
        <end position="81"/>
    </location>
</feature>
<feature type="disulfide bond" evidence="1">
    <location>
        <begin position="71"/>
        <end position="91"/>
    </location>
</feature>
<accession>P50707</accession>
<proteinExistence type="evidence at transcript level"/>
<organism>
    <name type="scientific">Mus musculus</name>
    <name type="common">Mouse</name>
    <dbReference type="NCBI Taxonomy" id="10090"/>
    <lineage>
        <taxon>Eukaryota</taxon>
        <taxon>Metazoa</taxon>
        <taxon>Chordata</taxon>
        <taxon>Craniata</taxon>
        <taxon>Vertebrata</taxon>
        <taxon>Euteleostomi</taxon>
        <taxon>Mammalia</taxon>
        <taxon>Eutheria</taxon>
        <taxon>Euarchontoglires</taxon>
        <taxon>Glires</taxon>
        <taxon>Rodentia</taxon>
        <taxon>Myomorpha</taxon>
        <taxon>Muroidea</taxon>
        <taxon>Muridae</taxon>
        <taxon>Murinae</taxon>
        <taxon>Mus</taxon>
        <taxon>Mus</taxon>
    </lineage>
</organism>
<sequence>MKTLVLLSALVLLAFQVQADPIQNTDEETKTEEQPGEEDQAVSVSFGDPEGSSLQEESLRDLVCYCRKRGCKRREHMNGTCRKGHLLYMLCCR</sequence>
<keyword id="KW-0044">Antibiotic</keyword>
<keyword id="KW-0929">Antimicrobial</keyword>
<keyword id="KW-0211">Defensin</keyword>
<keyword id="KW-1015">Disulfide bond</keyword>
<keyword id="KW-1185">Reference proteome</keyword>
<keyword id="KW-0964">Secreted</keyword>
<keyword id="KW-0732">Signal</keyword>